<comment type="catalytic activity">
    <reaction evidence="1">
        <text>(S)-malate + a quinone = a quinol + oxaloacetate</text>
        <dbReference type="Rhea" id="RHEA:46012"/>
        <dbReference type="ChEBI" id="CHEBI:15589"/>
        <dbReference type="ChEBI" id="CHEBI:16452"/>
        <dbReference type="ChEBI" id="CHEBI:24646"/>
        <dbReference type="ChEBI" id="CHEBI:132124"/>
        <dbReference type="EC" id="1.1.5.4"/>
    </reaction>
</comment>
<comment type="cofactor">
    <cofactor evidence="1">
        <name>FAD</name>
        <dbReference type="ChEBI" id="CHEBI:57692"/>
    </cofactor>
</comment>
<comment type="pathway">
    <text evidence="1">Carbohydrate metabolism; tricarboxylic acid cycle; oxaloacetate from (S)-malate (quinone route): step 1/1.</text>
</comment>
<comment type="similarity">
    <text evidence="1">Belongs to the MQO family.</text>
</comment>
<proteinExistence type="inferred from homology"/>
<keyword id="KW-0274">FAD</keyword>
<keyword id="KW-0285">Flavoprotein</keyword>
<keyword id="KW-0560">Oxidoreductase</keyword>
<keyword id="KW-0816">Tricarboxylic acid cycle</keyword>
<gene>
    <name evidence="1" type="primary">mqo</name>
    <name type="ordered locus">BT9727_2712</name>
</gene>
<evidence type="ECO:0000255" key="1">
    <source>
        <dbReference type="HAMAP-Rule" id="MF_00212"/>
    </source>
</evidence>
<organism>
    <name type="scientific">Bacillus thuringiensis subsp. konkukian (strain 97-27)</name>
    <dbReference type="NCBI Taxonomy" id="281309"/>
    <lineage>
        <taxon>Bacteria</taxon>
        <taxon>Bacillati</taxon>
        <taxon>Bacillota</taxon>
        <taxon>Bacilli</taxon>
        <taxon>Bacillales</taxon>
        <taxon>Bacillaceae</taxon>
        <taxon>Bacillus</taxon>
        <taxon>Bacillus cereus group</taxon>
    </lineage>
</organism>
<dbReference type="EC" id="1.1.5.4" evidence="1"/>
<dbReference type="EMBL" id="AE017355">
    <property type="protein sequence ID" value="AAT63839.1"/>
    <property type="molecule type" value="Genomic_DNA"/>
</dbReference>
<dbReference type="RefSeq" id="WP_000069158.1">
    <property type="nucleotide sequence ID" value="NC_005957.1"/>
</dbReference>
<dbReference type="RefSeq" id="YP_037036.1">
    <property type="nucleotide sequence ID" value="NC_005957.1"/>
</dbReference>
<dbReference type="SMR" id="Q6HHE0"/>
<dbReference type="KEGG" id="btk:BT9727_2712"/>
<dbReference type="PATRIC" id="fig|281309.8.peg.2878"/>
<dbReference type="HOGENOM" id="CLU_028151_0_0_9"/>
<dbReference type="UniPathway" id="UPA00223">
    <property type="reaction ID" value="UER01008"/>
</dbReference>
<dbReference type="Proteomes" id="UP000001301">
    <property type="component" value="Chromosome"/>
</dbReference>
<dbReference type="GO" id="GO:0047545">
    <property type="term" value="F:2-hydroxyglutarate dehydrogenase activity"/>
    <property type="evidence" value="ECO:0007669"/>
    <property type="project" value="TreeGrafter"/>
</dbReference>
<dbReference type="GO" id="GO:0008924">
    <property type="term" value="F:L-malate dehydrogenase (quinone) activity"/>
    <property type="evidence" value="ECO:0007669"/>
    <property type="project" value="UniProtKB-UniRule"/>
</dbReference>
<dbReference type="GO" id="GO:0006099">
    <property type="term" value="P:tricarboxylic acid cycle"/>
    <property type="evidence" value="ECO:0007669"/>
    <property type="project" value="UniProtKB-UniRule"/>
</dbReference>
<dbReference type="HAMAP" id="MF_00212">
    <property type="entry name" value="MQO"/>
    <property type="match status" value="1"/>
</dbReference>
<dbReference type="InterPro" id="IPR036188">
    <property type="entry name" value="FAD/NAD-bd_sf"/>
</dbReference>
<dbReference type="InterPro" id="IPR006231">
    <property type="entry name" value="MQO"/>
</dbReference>
<dbReference type="NCBIfam" id="TIGR01320">
    <property type="entry name" value="mal_quin_oxido"/>
    <property type="match status" value="1"/>
</dbReference>
<dbReference type="NCBIfam" id="NF003603">
    <property type="entry name" value="PRK05257.1-1"/>
    <property type="match status" value="1"/>
</dbReference>
<dbReference type="NCBIfam" id="NF003604">
    <property type="entry name" value="PRK05257.1-3"/>
    <property type="match status" value="1"/>
</dbReference>
<dbReference type="NCBIfam" id="NF003605">
    <property type="entry name" value="PRK05257.1-4"/>
    <property type="match status" value="1"/>
</dbReference>
<dbReference type="NCBIfam" id="NF003606">
    <property type="entry name" value="PRK05257.2-1"/>
    <property type="match status" value="1"/>
</dbReference>
<dbReference type="NCBIfam" id="NF003608">
    <property type="entry name" value="PRK05257.2-4"/>
    <property type="match status" value="1"/>
</dbReference>
<dbReference type="NCBIfam" id="NF003610">
    <property type="entry name" value="PRK05257.3-1"/>
    <property type="match status" value="1"/>
</dbReference>
<dbReference type="NCBIfam" id="NF003611">
    <property type="entry name" value="PRK05257.3-2"/>
    <property type="match status" value="1"/>
</dbReference>
<dbReference type="NCBIfam" id="NF009875">
    <property type="entry name" value="PRK13339.1"/>
    <property type="match status" value="1"/>
</dbReference>
<dbReference type="PANTHER" id="PTHR43104">
    <property type="entry name" value="L-2-HYDROXYGLUTARATE DEHYDROGENASE, MITOCHONDRIAL"/>
    <property type="match status" value="1"/>
</dbReference>
<dbReference type="PANTHER" id="PTHR43104:SF2">
    <property type="entry name" value="L-2-HYDROXYGLUTARATE DEHYDROGENASE, MITOCHONDRIAL"/>
    <property type="match status" value="1"/>
</dbReference>
<dbReference type="Pfam" id="PF06039">
    <property type="entry name" value="Mqo"/>
    <property type="match status" value="1"/>
</dbReference>
<dbReference type="SUPFAM" id="SSF51905">
    <property type="entry name" value="FAD/NAD(P)-binding domain"/>
    <property type="match status" value="1"/>
</dbReference>
<accession>Q6HHE0</accession>
<reference key="1">
    <citation type="journal article" date="2006" name="J. Bacteriol.">
        <title>Pathogenomic sequence analysis of Bacillus cereus and Bacillus thuringiensis isolates closely related to Bacillus anthracis.</title>
        <authorList>
            <person name="Han C.S."/>
            <person name="Xie G."/>
            <person name="Challacombe J.F."/>
            <person name="Altherr M.R."/>
            <person name="Bhotika S.S."/>
            <person name="Bruce D."/>
            <person name="Campbell C.S."/>
            <person name="Campbell M.L."/>
            <person name="Chen J."/>
            <person name="Chertkov O."/>
            <person name="Cleland C."/>
            <person name="Dimitrijevic M."/>
            <person name="Doggett N.A."/>
            <person name="Fawcett J.J."/>
            <person name="Glavina T."/>
            <person name="Goodwin L.A."/>
            <person name="Hill K.K."/>
            <person name="Hitchcock P."/>
            <person name="Jackson P.J."/>
            <person name="Keim P."/>
            <person name="Kewalramani A.R."/>
            <person name="Longmire J."/>
            <person name="Lucas S."/>
            <person name="Malfatti S."/>
            <person name="McMurry K."/>
            <person name="Meincke L.J."/>
            <person name="Misra M."/>
            <person name="Moseman B.L."/>
            <person name="Mundt M."/>
            <person name="Munk A.C."/>
            <person name="Okinaka R.T."/>
            <person name="Parson-Quintana B."/>
            <person name="Reilly L.P."/>
            <person name="Richardson P."/>
            <person name="Robinson D.L."/>
            <person name="Rubin E."/>
            <person name="Saunders E."/>
            <person name="Tapia R."/>
            <person name="Tesmer J.G."/>
            <person name="Thayer N."/>
            <person name="Thompson L.S."/>
            <person name="Tice H."/>
            <person name="Ticknor L.O."/>
            <person name="Wills P.L."/>
            <person name="Brettin T.S."/>
            <person name="Gilna P."/>
        </authorList>
    </citation>
    <scope>NUCLEOTIDE SEQUENCE [LARGE SCALE GENOMIC DNA]</scope>
    <source>
        <strain>97-27</strain>
    </source>
</reference>
<name>MQO_BACHK</name>
<sequence>MSNMQQKTDVILIGAGIMSATLGSLLKELAPEWEIKVFEKLASAGEESSNEWNNAGTGHSALCELNYTSEKSDGSIDISKAVKVNEQFQLSRQFWAYLVKSKLIRNPQDFIMPLPHMSLVQGEKNVEFLKNRFEALSKNPLFQGMEFSDAPETLKKWLPLIMEGRTSNEPMAATKIDSGTDVNFGALTRMLFDYLKTKDVELNYKHSVENIKRTKNGLWEVKVHDMNSGKIEHHTAKFVFIGGGGGSLPLLQKTGIPESKHIGGFPVSGLFMVCKNQKVVEQHHAKVYGKAKVGAPPMSVPHLDTRYIDNKKALLFGPFAGFSPKFLKTGSNLDLIGSVKPNNVLTMLAAGVKEMGLTKYLIQQVMLSHEKRMEELREFIPNAKSEDWDIVVAGQRVQVIKDTDAGGKGTLQFGTEVVSAADGSIAALLGASPGASTAVHVMLEVLEKCFPSRMVEWEGKIKEMIPSYGISLTENPRLFQDLHTSTGRTLGLNEKETVHN</sequence>
<protein>
    <recommendedName>
        <fullName evidence="1">Probable malate:quinone oxidoreductase</fullName>
        <ecNumber evidence="1">1.1.5.4</ecNumber>
    </recommendedName>
    <alternativeName>
        <fullName evidence="1">MQO</fullName>
    </alternativeName>
    <alternativeName>
        <fullName evidence="1">Malate dehydrogenase [quinone]</fullName>
    </alternativeName>
</protein>
<feature type="chain" id="PRO_1000023793" description="Probable malate:quinone oxidoreductase">
    <location>
        <begin position="1"/>
        <end position="500"/>
    </location>
</feature>